<evidence type="ECO:0000255" key="1">
    <source>
        <dbReference type="HAMAP-Rule" id="MF_00098"/>
    </source>
</evidence>
<protein>
    <recommendedName>
        <fullName evidence="1">Methionine--tRNA ligase</fullName>
        <ecNumber evidence="1">6.1.1.10</ecNumber>
    </recommendedName>
    <alternativeName>
        <fullName evidence="1">Methionyl-tRNA synthetase</fullName>
        <shortName evidence="1">MetRS</shortName>
    </alternativeName>
</protein>
<accession>B5FMX1</accession>
<reference key="1">
    <citation type="journal article" date="2011" name="J. Bacteriol.">
        <title>Comparative genomics of 28 Salmonella enterica isolates: evidence for CRISPR-mediated adaptive sublineage evolution.</title>
        <authorList>
            <person name="Fricke W.F."/>
            <person name="Mammel M.K."/>
            <person name="McDermott P.F."/>
            <person name="Tartera C."/>
            <person name="White D.G."/>
            <person name="Leclerc J.E."/>
            <person name="Ravel J."/>
            <person name="Cebula T.A."/>
        </authorList>
    </citation>
    <scope>NUCLEOTIDE SEQUENCE [LARGE SCALE GENOMIC DNA]</scope>
    <source>
        <strain>CT_02021853</strain>
    </source>
</reference>
<organism>
    <name type="scientific">Salmonella dublin (strain CT_02021853)</name>
    <dbReference type="NCBI Taxonomy" id="439851"/>
    <lineage>
        <taxon>Bacteria</taxon>
        <taxon>Pseudomonadati</taxon>
        <taxon>Pseudomonadota</taxon>
        <taxon>Gammaproteobacteria</taxon>
        <taxon>Enterobacterales</taxon>
        <taxon>Enterobacteriaceae</taxon>
        <taxon>Salmonella</taxon>
    </lineage>
</organism>
<name>SYM_SALDC</name>
<comment type="function">
    <text evidence="1">Is required not only for elongation of protein synthesis but also for the initiation of all mRNA translation through initiator tRNA(fMet) aminoacylation.</text>
</comment>
<comment type="catalytic activity">
    <reaction evidence="1">
        <text>tRNA(Met) + L-methionine + ATP = L-methionyl-tRNA(Met) + AMP + diphosphate</text>
        <dbReference type="Rhea" id="RHEA:13481"/>
        <dbReference type="Rhea" id="RHEA-COMP:9667"/>
        <dbReference type="Rhea" id="RHEA-COMP:9698"/>
        <dbReference type="ChEBI" id="CHEBI:30616"/>
        <dbReference type="ChEBI" id="CHEBI:33019"/>
        <dbReference type="ChEBI" id="CHEBI:57844"/>
        <dbReference type="ChEBI" id="CHEBI:78442"/>
        <dbReference type="ChEBI" id="CHEBI:78530"/>
        <dbReference type="ChEBI" id="CHEBI:456215"/>
        <dbReference type="EC" id="6.1.1.10"/>
    </reaction>
</comment>
<comment type="cofactor">
    <cofactor evidence="1">
        <name>Zn(2+)</name>
        <dbReference type="ChEBI" id="CHEBI:29105"/>
    </cofactor>
    <text evidence="1">Binds 1 zinc ion per subunit.</text>
</comment>
<comment type="subunit">
    <text evidence="1">Homodimer.</text>
</comment>
<comment type="subcellular location">
    <subcellularLocation>
        <location evidence="1">Cytoplasm</location>
    </subcellularLocation>
</comment>
<comment type="similarity">
    <text evidence="1">Belongs to the class-I aminoacyl-tRNA synthetase family. MetG type 1 subfamily.</text>
</comment>
<dbReference type="EC" id="6.1.1.10" evidence="1"/>
<dbReference type="EMBL" id="CP001144">
    <property type="protein sequence ID" value="ACH73699.1"/>
    <property type="molecule type" value="Genomic_DNA"/>
</dbReference>
<dbReference type="RefSeq" id="WP_000195332.1">
    <property type="nucleotide sequence ID" value="NC_011205.1"/>
</dbReference>
<dbReference type="SMR" id="B5FMX1"/>
<dbReference type="KEGG" id="sed:SeD_A2501"/>
<dbReference type="HOGENOM" id="CLU_009710_7_0_6"/>
<dbReference type="Proteomes" id="UP000008322">
    <property type="component" value="Chromosome"/>
</dbReference>
<dbReference type="GO" id="GO:0005829">
    <property type="term" value="C:cytosol"/>
    <property type="evidence" value="ECO:0007669"/>
    <property type="project" value="TreeGrafter"/>
</dbReference>
<dbReference type="GO" id="GO:0005524">
    <property type="term" value="F:ATP binding"/>
    <property type="evidence" value="ECO:0007669"/>
    <property type="project" value="UniProtKB-UniRule"/>
</dbReference>
<dbReference type="GO" id="GO:0046872">
    <property type="term" value="F:metal ion binding"/>
    <property type="evidence" value="ECO:0007669"/>
    <property type="project" value="UniProtKB-KW"/>
</dbReference>
<dbReference type="GO" id="GO:0004825">
    <property type="term" value="F:methionine-tRNA ligase activity"/>
    <property type="evidence" value="ECO:0007669"/>
    <property type="project" value="UniProtKB-UniRule"/>
</dbReference>
<dbReference type="GO" id="GO:0000049">
    <property type="term" value="F:tRNA binding"/>
    <property type="evidence" value="ECO:0007669"/>
    <property type="project" value="UniProtKB-KW"/>
</dbReference>
<dbReference type="GO" id="GO:0006431">
    <property type="term" value="P:methionyl-tRNA aminoacylation"/>
    <property type="evidence" value="ECO:0007669"/>
    <property type="project" value="UniProtKB-UniRule"/>
</dbReference>
<dbReference type="CDD" id="cd07957">
    <property type="entry name" value="Anticodon_Ia_Met"/>
    <property type="match status" value="1"/>
</dbReference>
<dbReference type="CDD" id="cd00814">
    <property type="entry name" value="MetRS_core"/>
    <property type="match status" value="1"/>
</dbReference>
<dbReference type="CDD" id="cd02800">
    <property type="entry name" value="tRNA_bind_EcMetRS_like"/>
    <property type="match status" value="1"/>
</dbReference>
<dbReference type="FunFam" id="1.10.730.10:FF:000005">
    <property type="entry name" value="Methionine--tRNA ligase"/>
    <property type="match status" value="1"/>
</dbReference>
<dbReference type="FunFam" id="2.20.28.20:FF:000001">
    <property type="entry name" value="Methionine--tRNA ligase"/>
    <property type="match status" value="1"/>
</dbReference>
<dbReference type="FunFam" id="2.40.50.140:FF:000042">
    <property type="entry name" value="Methionine--tRNA ligase"/>
    <property type="match status" value="1"/>
</dbReference>
<dbReference type="Gene3D" id="3.40.50.620">
    <property type="entry name" value="HUPs"/>
    <property type="match status" value="1"/>
</dbReference>
<dbReference type="Gene3D" id="1.10.730.10">
    <property type="entry name" value="Isoleucyl-tRNA Synthetase, Domain 1"/>
    <property type="match status" value="1"/>
</dbReference>
<dbReference type="Gene3D" id="2.20.28.20">
    <property type="entry name" value="Methionyl-tRNA synthetase, Zn-domain"/>
    <property type="match status" value="1"/>
</dbReference>
<dbReference type="Gene3D" id="2.40.50.140">
    <property type="entry name" value="Nucleic acid-binding proteins"/>
    <property type="match status" value="1"/>
</dbReference>
<dbReference type="HAMAP" id="MF_00098">
    <property type="entry name" value="Met_tRNA_synth_type1"/>
    <property type="match status" value="1"/>
</dbReference>
<dbReference type="InterPro" id="IPR001412">
    <property type="entry name" value="aa-tRNA-synth_I_CS"/>
</dbReference>
<dbReference type="InterPro" id="IPR041872">
    <property type="entry name" value="Anticodon_Met"/>
</dbReference>
<dbReference type="InterPro" id="IPR004495">
    <property type="entry name" value="Met-tRNA-synth_bsu_C"/>
</dbReference>
<dbReference type="InterPro" id="IPR023458">
    <property type="entry name" value="Met-tRNA_ligase_1"/>
</dbReference>
<dbReference type="InterPro" id="IPR014758">
    <property type="entry name" value="Met-tRNA_synth"/>
</dbReference>
<dbReference type="InterPro" id="IPR015413">
    <property type="entry name" value="Methionyl/Leucyl_tRNA_Synth"/>
</dbReference>
<dbReference type="InterPro" id="IPR033911">
    <property type="entry name" value="MetRS_core"/>
</dbReference>
<dbReference type="InterPro" id="IPR029038">
    <property type="entry name" value="MetRS_Zn"/>
</dbReference>
<dbReference type="InterPro" id="IPR012340">
    <property type="entry name" value="NA-bd_OB-fold"/>
</dbReference>
<dbReference type="InterPro" id="IPR014729">
    <property type="entry name" value="Rossmann-like_a/b/a_fold"/>
</dbReference>
<dbReference type="InterPro" id="IPR002547">
    <property type="entry name" value="tRNA-bd_dom"/>
</dbReference>
<dbReference type="InterPro" id="IPR009080">
    <property type="entry name" value="tRNAsynth_Ia_anticodon-bd"/>
</dbReference>
<dbReference type="NCBIfam" id="TIGR00398">
    <property type="entry name" value="metG"/>
    <property type="match status" value="1"/>
</dbReference>
<dbReference type="NCBIfam" id="TIGR00399">
    <property type="entry name" value="metG_C_term"/>
    <property type="match status" value="1"/>
</dbReference>
<dbReference type="NCBIfam" id="NF001100">
    <property type="entry name" value="PRK00133.1"/>
    <property type="match status" value="1"/>
</dbReference>
<dbReference type="PANTHER" id="PTHR45765">
    <property type="entry name" value="METHIONINE--TRNA LIGASE"/>
    <property type="match status" value="1"/>
</dbReference>
<dbReference type="PANTHER" id="PTHR45765:SF1">
    <property type="entry name" value="METHIONINE--TRNA LIGASE, CYTOPLASMIC"/>
    <property type="match status" value="1"/>
</dbReference>
<dbReference type="Pfam" id="PF19303">
    <property type="entry name" value="Anticodon_3"/>
    <property type="match status" value="1"/>
</dbReference>
<dbReference type="Pfam" id="PF09334">
    <property type="entry name" value="tRNA-synt_1g"/>
    <property type="match status" value="1"/>
</dbReference>
<dbReference type="Pfam" id="PF01588">
    <property type="entry name" value="tRNA_bind"/>
    <property type="match status" value="1"/>
</dbReference>
<dbReference type="PRINTS" id="PR01041">
    <property type="entry name" value="TRNASYNTHMET"/>
</dbReference>
<dbReference type="SUPFAM" id="SSF47323">
    <property type="entry name" value="Anticodon-binding domain of a subclass of class I aminoacyl-tRNA synthetases"/>
    <property type="match status" value="1"/>
</dbReference>
<dbReference type="SUPFAM" id="SSF57770">
    <property type="entry name" value="Methionyl-tRNA synthetase (MetRS), Zn-domain"/>
    <property type="match status" value="1"/>
</dbReference>
<dbReference type="SUPFAM" id="SSF50249">
    <property type="entry name" value="Nucleic acid-binding proteins"/>
    <property type="match status" value="1"/>
</dbReference>
<dbReference type="SUPFAM" id="SSF52374">
    <property type="entry name" value="Nucleotidylyl transferase"/>
    <property type="match status" value="1"/>
</dbReference>
<dbReference type="PROSITE" id="PS00178">
    <property type="entry name" value="AA_TRNA_LIGASE_I"/>
    <property type="match status" value="1"/>
</dbReference>
<dbReference type="PROSITE" id="PS50886">
    <property type="entry name" value="TRBD"/>
    <property type="match status" value="1"/>
</dbReference>
<proteinExistence type="inferred from homology"/>
<feature type="chain" id="PRO_1000093726" description="Methionine--tRNA ligase">
    <location>
        <begin position="1"/>
        <end position="677"/>
    </location>
</feature>
<feature type="domain" description="tRNA-binding" evidence="1">
    <location>
        <begin position="575"/>
        <end position="677"/>
    </location>
</feature>
<feature type="short sequence motif" description="'HIGH' region">
    <location>
        <begin position="15"/>
        <end position="25"/>
    </location>
</feature>
<feature type="short sequence motif" description="'KMSKS' region">
    <location>
        <begin position="333"/>
        <end position="337"/>
    </location>
</feature>
<feature type="binding site" evidence="1">
    <location>
        <position position="146"/>
    </location>
    <ligand>
        <name>Zn(2+)</name>
        <dbReference type="ChEBI" id="CHEBI:29105"/>
    </ligand>
</feature>
<feature type="binding site" evidence="1">
    <location>
        <position position="149"/>
    </location>
    <ligand>
        <name>Zn(2+)</name>
        <dbReference type="ChEBI" id="CHEBI:29105"/>
    </ligand>
</feature>
<feature type="binding site" evidence="1">
    <location>
        <position position="159"/>
    </location>
    <ligand>
        <name>Zn(2+)</name>
        <dbReference type="ChEBI" id="CHEBI:29105"/>
    </ligand>
</feature>
<feature type="binding site" evidence="1">
    <location>
        <position position="162"/>
    </location>
    <ligand>
        <name>Zn(2+)</name>
        <dbReference type="ChEBI" id="CHEBI:29105"/>
    </ligand>
</feature>
<feature type="binding site" evidence="1">
    <location>
        <position position="336"/>
    </location>
    <ligand>
        <name>ATP</name>
        <dbReference type="ChEBI" id="CHEBI:30616"/>
    </ligand>
</feature>
<keyword id="KW-0030">Aminoacyl-tRNA synthetase</keyword>
<keyword id="KW-0067">ATP-binding</keyword>
<keyword id="KW-0963">Cytoplasm</keyword>
<keyword id="KW-0436">Ligase</keyword>
<keyword id="KW-0479">Metal-binding</keyword>
<keyword id="KW-0547">Nucleotide-binding</keyword>
<keyword id="KW-0648">Protein biosynthesis</keyword>
<keyword id="KW-0694">RNA-binding</keyword>
<keyword id="KW-0820">tRNA-binding</keyword>
<keyword id="KW-0862">Zinc</keyword>
<sequence length="677" mass="76274">MTQVAKKILVTCALPYANGSIHLGHMLEHIQADVWVRYQRMRGHEVNFICADDAHGTPIMLKAQQLGITPEQMIGEMSQEHQTDFAGFNISYDNYHSTHSDENRELSELIYTRLKENGFIKNRTISQLYDPEKGMFLPDRFVKGTCPKCKSADQYGDNCEVCGATYSPTELIEPKSVVSGATPVMRDSEHFFFDLPSFSEMLQAWTRSGALQEQVANKMQEWFESGLQQWDISRDAPYFGFEIPNAPGKYFYVWLDAPIGYMGSFKNLCDKRGDTTSFDEYWKKDSDAELYHFIGKDIVYFHSLFWPAMLEGSHFRKPTNLFVHGYVTVNGAKMSKSRGTFIKASTWLKHFDADSLRYYYTAKLSSRIDDIDLNLEDFVQRVNADIVNKVVNLASRNAGFINKRFDGVLAAELADPQLYKTFTDAAAVIGEAWESREFGKAIREIMALADIANRYVDEQAPWVVAKQEGRDADLQAICSMGINLFRVLMTYLKPVLPTLSERVEAFLNSELNWDAIEQPLLGHKVNTFKALYNRIDMKQVEALVESSKEEVKAAAAPVTGPLADFPIQETITFDDFAKIDLRVALIENAEFVDGSDKLLRLTLDLGGEKRNVFSGIRSAYPDPQALIGRQTVMVANLAPRKMRFGVSEGMVMAAGPGGKDIFLLSPDDGAKPGQQVK</sequence>
<gene>
    <name evidence="1" type="primary">metG</name>
    <name type="ordered locus">SeD_A2501</name>
</gene>